<protein>
    <recommendedName>
        <fullName evidence="2">Ornithine carbamoyltransferase</fullName>
        <shortName evidence="2">OTCase</shortName>
        <ecNumber evidence="2">2.1.3.3</ecNumber>
    </recommendedName>
</protein>
<proteinExistence type="inferred from homology"/>
<reference key="1">
    <citation type="journal article" date="2004" name="Mol. Plant Microbe Interact.">
        <title>The genome sequence of the Gram-positive sugarcane pathogen Leifsonia xyli subsp. xyli.</title>
        <authorList>
            <person name="Monteiro-Vitorello C.B."/>
            <person name="Camargo L.E.A."/>
            <person name="Van Sluys M.A."/>
            <person name="Kitajima J.P."/>
            <person name="Truffi D."/>
            <person name="do Amaral A.M."/>
            <person name="Harakava R."/>
            <person name="de Oliveira J.C.F."/>
            <person name="Wood D."/>
            <person name="de Oliveira M.C."/>
            <person name="Miyaki C.Y."/>
            <person name="Takita M.A."/>
            <person name="da Silva A.C.R."/>
            <person name="Furlan L.R."/>
            <person name="Carraro D.M."/>
            <person name="Camarotte G."/>
            <person name="Almeida N.F. Jr."/>
            <person name="Carrer H."/>
            <person name="Coutinho L.L."/>
            <person name="El-Dorry H.A."/>
            <person name="Ferro M.I.T."/>
            <person name="Gagliardi P.R."/>
            <person name="Giglioti E."/>
            <person name="Goldman M.H.S."/>
            <person name="Goldman G.H."/>
            <person name="Kimura E.T."/>
            <person name="Ferro E.S."/>
            <person name="Kuramae E.E."/>
            <person name="Lemos E.G.M."/>
            <person name="Lemos M.V.F."/>
            <person name="Mauro S.M.Z."/>
            <person name="Machado M.A."/>
            <person name="Marino C.L."/>
            <person name="Menck C.F."/>
            <person name="Nunes L.R."/>
            <person name="Oliveira R.C."/>
            <person name="Pereira G.G."/>
            <person name="Siqueira W."/>
            <person name="de Souza A.A."/>
            <person name="Tsai S.M."/>
            <person name="Zanca A.S."/>
            <person name="Simpson A.J.G."/>
            <person name="Brumbley S.M."/>
            <person name="Setubal J.C."/>
        </authorList>
    </citation>
    <scope>NUCLEOTIDE SEQUENCE [LARGE SCALE GENOMIC DNA]</scope>
    <source>
        <strain>CTCB07</strain>
    </source>
</reference>
<gene>
    <name evidence="2" type="primary">argF</name>
    <name type="ordered locus">Lxx06070</name>
</gene>
<keyword id="KW-0028">Amino-acid biosynthesis</keyword>
<keyword id="KW-0055">Arginine biosynthesis</keyword>
<keyword id="KW-0963">Cytoplasm</keyword>
<keyword id="KW-1185">Reference proteome</keyword>
<keyword id="KW-0808">Transferase</keyword>
<feature type="chain" id="PRO_0000112939" description="Ornithine carbamoyltransferase">
    <location>
        <begin position="1"/>
        <end position="312"/>
    </location>
</feature>
<feature type="binding site" evidence="2">
    <location>
        <begin position="50"/>
        <end position="53"/>
    </location>
    <ligand>
        <name>carbamoyl phosphate</name>
        <dbReference type="ChEBI" id="CHEBI:58228"/>
    </ligand>
</feature>
<feature type="binding site" evidence="2">
    <location>
        <position position="77"/>
    </location>
    <ligand>
        <name>carbamoyl phosphate</name>
        <dbReference type="ChEBI" id="CHEBI:58228"/>
    </ligand>
</feature>
<feature type="binding site" evidence="2">
    <location>
        <position position="101"/>
    </location>
    <ligand>
        <name>carbamoyl phosphate</name>
        <dbReference type="ChEBI" id="CHEBI:58228"/>
    </ligand>
</feature>
<feature type="binding site" evidence="2">
    <location>
        <begin position="128"/>
        <end position="131"/>
    </location>
    <ligand>
        <name>carbamoyl phosphate</name>
        <dbReference type="ChEBI" id="CHEBI:58228"/>
    </ligand>
</feature>
<feature type="binding site" evidence="2">
    <location>
        <position position="160"/>
    </location>
    <ligand>
        <name>L-ornithine</name>
        <dbReference type="ChEBI" id="CHEBI:46911"/>
    </ligand>
</feature>
<feature type="binding site" evidence="2">
    <location>
        <position position="224"/>
    </location>
    <ligand>
        <name>L-ornithine</name>
        <dbReference type="ChEBI" id="CHEBI:46911"/>
    </ligand>
</feature>
<feature type="binding site" evidence="2">
    <location>
        <begin position="228"/>
        <end position="229"/>
    </location>
    <ligand>
        <name>L-ornithine</name>
        <dbReference type="ChEBI" id="CHEBI:46911"/>
    </ligand>
</feature>
<feature type="binding site" evidence="2">
    <location>
        <begin position="264"/>
        <end position="265"/>
    </location>
    <ligand>
        <name>carbamoyl phosphate</name>
        <dbReference type="ChEBI" id="CHEBI:58228"/>
    </ligand>
</feature>
<feature type="binding site" evidence="2">
    <location>
        <position position="292"/>
    </location>
    <ligand>
        <name>carbamoyl phosphate</name>
        <dbReference type="ChEBI" id="CHEBI:58228"/>
    </ligand>
</feature>
<accession>Q6AGC9</accession>
<comment type="function">
    <text evidence="1">Reversibly catalyzes the transfer of the carbamoyl group from carbamoyl phosphate (CP) to the N(epsilon) atom of ornithine (ORN) to produce L-citrulline.</text>
</comment>
<comment type="catalytic activity">
    <reaction evidence="2">
        <text>carbamoyl phosphate + L-ornithine = L-citrulline + phosphate + H(+)</text>
        <dbReference type="Rhea" id="RHEA:19513"/>
        <dbReference type="ChEBI" id="CHEBI:15378"/>
        <dbReference type="ChEBI" id="CHEBI:43474"/>
        <dbReference type="ChEBI" id="CHEBI:46911"/>
        <dbReference type="ChEBI" id="CHEBI:57743"/>
        <dbReference type="ChEBI" id="CHEBI:58228"/>
        <dbReference type="EC" id="2.1.3.3"/>
    </reaction>
</comment>
<comment type="pathway">
    <text evidence="2">Amino-acid biosynthesis; L-arginine biosynthesis; L-arginine from L-ornithine and carbamoyl phosphate: step 1/3.</text>
</comment>
<comment type="subcellular location">
    <subcellularLocation>
        <location evidence="2">Cytoplasm</location>
    </subcellularLocation>
</comment>
<comment type="similarity">
    <text evidence="2">Belongs to the aspartate/ornithine carbamoyltransferase superfamily. OTCase family.</text>
</comment>
<name>OTC_LEIXX</name>
<organism>
    <name type="scientific">Leifsonia xyli subsp. xyli (strain CTCB07)</name>
    <dbReference type="NCBI Taxonomy" id="281090"/>
    <lineage>
        <taxon>Bacteria</taxon>
        <taxon>Bacillati</taxon>
        <taxon>Actinomycetota</taxon>
        <taxon>Actinomycetes</taxon>
        <taxon>Micrococcales</taxon>
        <taxon>Microbacteriaceae</taxon>
        <taxon>Leifsonia</taxon>
    </lineage>
</organism>
<evidence type="ECO:0000250" key="1"/>
<evidence type="ECO:0000255" key="2">
    <source>
        <dbReference type="HAMAP-Rule" id="MF_01109"/>
    </source>
</evidence>
<dbReference type="EC" id="2.1.3.3" evidence="2"/>
<dbReference type="EMBL" id="AE016822">
    <property type="protein sequence ID" value="AAT88566.1"/>
    <property type="molecule type" value="Genomic_DNA"/>
</dbReference>
<dbReference type="RefSeq" id="WP_011185565.1">
    <property type="nucleotide sequence ID" value="NC_006087.1"/>
</dbReference>
<dbReference type="SMR" id="Q6AGC9"/>
<dbReference type="STRING" id="281090.Lxx06070"/>
<dbReference type="KEGG" id="lxx:Lxx06070"/>
<dbReference type="eggNOG" id="COG0078">
    <property type="taxonomic scope" value="Bacteria"/>
</dbReference>
<dbReference type="HOGENOM" id="CLU_043846_3_2_11"/>
<dbReference type="UniPathway" id="UPA00068">
    <property type="reaction ID" value="UER00112"/>
</dbReference>
<dbReference type="Proteomes" id="UP000001306">
    <property type="component" value="Chromosome"/>
</dbReference>
<dbReference type="GO" id="GO:0005737">
    <property type="term" value="C:cytoplasm"/>
    <property type="evidence" value="ECO:0007669"/>
    <property type="project" value="UniProtKB-SubCell"/>
</dbReference>
<dbReference type="GO" id="GO:0016597">
    <property type="term" value="F:amino acid binding"/>
    <property type="evidence" value="ECO:0007669"/>
    <property type="project" value="InterPro"/>
</dbReference>
<dbReference type="GO" id="GO:0004585">
    <property type="term" value="F:ornithine carbamoyltransferase activity"/>
    <property type="evidence" value="ECO:0007669"/>
    <property type="project" value="UniProtKB-UniRule"/>
</dbReference>
<dbReference type="GO" id="GO:0042450">
    <property type="term" value="P:arginine biosynthetic process via ornithine"/>
    <property type="evidence" value="ECO:0007669"/>
    <property type="project" value="TreeGrafter"/>
</dbReference>
<dbReference type="GO" id="GO:0019240">
    <property type="term" value="P:citrulline biosynthetic process"/>
    <property type="evidence" value="ECO:0007669"/>
    <property type="project" value="TreeGrafter"/>
</dbReference>
<dbReference type="GO" id="GO:0006526">
    <property type="term" value="P:L-arginine biosynthetic process"/>
    <property type="evidence" value="ECO:0007669"/>
    <property type="project" value="UniProtKB-UniRule"/>
</dbReference>
<dbReference type="FunFam" id="3.40.50.1370:FF:000008">
    <property type="entry name" value="Ornithine carbamoyltransferase"/>
    <property type="match status" value="1"/>
</dbReference>
<dbReference type="Gene3D" id="3.40.50.1370">
    <property type="entry name" value="Aspartate/ornithine carbamoyltransferase"/>
    <property type="match status" value="2"/>
</dbReference>
<dbReference type="HAMAP" id="MF_01109">
    <property type="entry name" value="OTCase"/>
    <property type="match status" value="1"/>
</dbReference>
<dbReference type="InterPro" id="IPR006132">
    <property type="entry name" value="Asp/Orn_carbamoyltranf_P-bd"/>
</dbReference>
<dbReference type="InterPro" id="IPR006130">
    <property type="entry name" value="Asp/Orn_carbamoylTrfase"/>
</dbReference>
<dbReference type="InterPro" id="IPR036901">
    <property type="entry name" value="Asp/Orn_carbamoylTrfase_sf"/>
</dbReference>
<dbReference type="InterPro" id="IPR006131">
    <property type="entry name" value="Asp_carbamoyltransf_Asp/Orn-bd"/>
</dbReference>
<dbReference type="InterPro" id="IPR002292">
    <property type="entry name" value="Orn/put_carbamltrans"/>
</dbReference>
<dbReference type="InterPro" id="IPR024904">
    <property type="entry name" value="OTCase_ArgI"/>
</dbReference>
<dbReference type="NCBIfam" id="TIGR00658">
    <property type="entry name" value="orni_carb_tr"/>
    <property type="match status" value="1"/>
</dbReference>
<dbReference type="NCBIfam" id="NF001986">
    <property type="entry name" value="PRK00779.1"/>
    <property type="match status" value="1"/>
</dbReference>
<dbReference type="PANTHER" id="PTHR45753">
    <property type="entry name" value="ORNITHINE CARBAMOYLTRANSFERASE, MITOCHONDRIAL"/>
    <property type="match status" value="1"/>
</dbReference>
<dbReference type="PANTHER" id="PTHR45753:SF3">
    <property type="entry name" value="ORNITHINE TRANSCARBAMYLASE, MITOCHONDRIAL"/>
    <property type="match status" value="1"/>
</dbReference>
<dbReference type="Pfam" id="PF00185">
    <property type="entry name" value="OTCace"/>
    <property type="match status" value="1"/>
</dbReference>
<dbReference type="Pfam" id="PF02729">
    <property type="entry name" value="OTCace_N"/>
    <property type="match status" value="1"/>
</dbReference>
<dbReference type="PRINTS" id="PR00100">
    <property type="entry name" value="AOTCASE"/>
</dbReference>
<dbReference type="PRINTS" id="PR00102">
    <property type="entry name" value="OTCASE"/>
</dbReference>
<dbReference type="SUPFAM" id="SSF53671">
    <property type="entry name" value="Aspartate/ornithine carbamoyltransferase"/>
    <property type="match status" value="1"/>
</dbReference>
<dbReference type="PROSITE" id="PS00097">
    <property type="entry name" value="CARBAMOYLTRANSFERASE"/>
    <property type="match status" value="1"/>
</dbReference>
<sequence length="312" mass="33312">MTRHFLRDDDLSPAEQVEVLDLAAKLKRDRFSARPLAGPQTVAVMFDKTSTRTRLSFATGIADLGGNPLIIQAGESQVGAKESLADTARVMERMLAAIVWRTFAHSGLEELVDGTRIPVVNALSDDVHPCQTLADLQTVRERKGRTAGLTMSFFGDGASNMAHSSLLGGVTAGMRVRIAAPAGYTPDPRFVADAEAIAARTGGSVLVTADPGEAAAGADVIVTDTWVSMGKEDEKAERIAVFGDYAVNAGTLRLADPAAIFLHCLPAYRGLEVSAYVIDGPQSVVWDEAENRLHAQKALLTWLLAKNREDAV</sequence>